<evidence type="ECO:0000255" key="1"/>
<evidence type="ECO:0000255" key="2">
    <source>
        <dbReference type="PROSITE-ProRule" id="PRU01117"/>
    </source>
</evidence>
<evidence type="ECO:0000256" key="3">
    <source>
        <dbReference type="SAM" id="MobiDB-lite"/>
    </source>
</evidence>
<evidence type="ECO:0000305" key="4"/>
<evidence type="ECO:0007829" key="5">
    <source>
        <dbReference type="PDB" id="4LXC"/>
    </source>
</evidence>
<evidence type="ECO:0007829" key="6">
    <source>
        <dbReference type="PDB" id="4QP5"/>
    </source>
</evidence>
<evidence type="ECO:0007829" key="7">
    <source>
        <dbReference type="PDB" id="5NMY"/>
    </source>
</evidence>
<evidence type="ECO:0007829" key="8">
    <source>
        <dbReference type="PDB" id="6RK4"/>
    </source>
</evidence>
<comment type="function">
    <text>Lyses staphylococcal cells by hydrolyzing the polyglycine interpeptide bridges of the peptidoglycan.</text>
</comment>
<comment type="catalytic activity">
    <reaction>
        <text>Hydrolysis of the -Gly-|-Gly- bond in the pentaglycine inter-peptide link joining staphylococcal cell wall peptidoglycans.</text>
        <dbReference type="EC" id="3.4.24.75"/>
    </reaction>
</comment>
<comment type="cofactor">
    <cofactor>
        <name>Zn(2+)</name>
        <dbReference type="ChEBI" id="CHEBI:29105"/>
    </cofactor>
    <text>Binds 1 zinc ion per subunit.</text>
</comment>
<comment type="subunit">
    <text>Monomer.</text>
</comment>
<comment type="subcellular location">
    <subcellularLocation>
        <location>Secreted</location>
    </subcellularLocation>
</comment>
<comment type="similarity">
    <text evidence="4">Belongs to the peptidase M23B family.</text>
</comment>
<reference key="1">
    <citation type="journal article" date="1987" name="Proc. Natl. Acad. Sci. U.S.A.">
        <title>Cloning, sequence, and expression of the lysostaphin gene from Staphylococcus simulans.</title>
        <authorList>
            <person name="Recsei P.A."/>
            <person name="Gruss A.D."/>
            <person name="Novick R.P."/>
        </authorList>
    </citation>
    <scope>NUCLEOTIDE SEQUENCE [GENOMIC DNA]</scope>
    <source>
        <strain>DSM 20723 / NRRL B-2628</strain>
    </source>
</reference>
<reference key="2">
    <citation type="journal article" date="1997" name="Mol. Microbiol.">
        <title>Studies on prolysostaphin processing and characterization of the lysostaphin immunity factor (Lif) of Staphylococcus simulans biovar staphylolyticus.</title>
        <authorList>
            <person name="Thumm G."/>
            <person name="Goetz F."/>
        </authorList>
    </citation>
    <scope>NUCLEOTIDE SEQUENCE [GENOMIC DNA]</scope>
    <source>
        <strain>ATCC 1362</strain>
    </source>
</reference>
<organism>
    <name type="scientific">Staphylococcus simulans</name>
    <dbReference type="NCBI Taxonomy" id="1286"/>
    <lineage>
        <taxon>Bacteria</taxon>
        <taxon>Bacillati</taxon>
        <taxon>Bacillota</taxon>
        <taxon>Bacilli</taxon>
        <taxon>Bacillales</taxon>
        <taxon>Staphylococcaceae</taxon>
        <taxon>Staphylococcus</taxon>
    </lineage>
</organism>
<keyword id="KW-0002">3D-structure</keyword>
<keyword id="KW-0961">Cell wall biogenesis/degradation</keyword>
<keyword id="KW-0378">Hydrolase</keyword>
<keyword id="KW-0479">Metal-binding</keyword>
<keyword id="KW-0482">Metalloprotease</keyword>
<keyword id="KW-0645">Protease</keyword>
<keyword id="KW-0677">Repeat</keyword>
<keyword id="KW-0964">Secreted</keyword>
<keyword id="KW-0732">Signal</keyword>
<keyword id="KW-0862">Zinc</keyword>
<keyword id="KW-0865">Zymogen</keyword>
<name>LSTP_STASI</name>
<dbReference type="EC" id="3.4.24.75"/>
<dbReference type="EMBL" id="U66883">
    <property type="protein sequence ID" value="AAB53783.1"/>
    <property type="molecule type" value="Genomic_DNA"/>
</dbReference>
<dbReference type="EMBL" id="M15686">
    <property type="protein sequence ID" value="AAA26655.1"/>
    <property type="molecule type" value="Genomic_DNA"/>
</dbReference>
<dbReference type="PIR" id="A25881">
    <property type="entry name" value="A25881"/>
</dbReference>
<dbReference type="PDB" id="4LXC">
    <property type="method" value="X-ray"/>
    <property type="resolution" value="3.50 A"/>
    <property type="chains" value="A/B/C/D=248-493"/>
</dbReference>
<dbReference type="PDB" id="4QP5">
    <property type="method" value="X-ray"/>
    <property type="resolution" value="1.26 A"/>
    <property type="chains" value="A/B=248-386"/>
</dbReference>
<dbReference type="PDB" id="4QPB">
    <property type="method" value="X-ray"/>
    <property type="resolution" value="1.78 A"/>
    <property type="chains" value="A/B=248-386"/>
</dbReference>
<dbReference type="PDB" id="5LEO">
    <property type="method" value="X-ray"/>
    <property type="resolution" value="1.60 A"/>
    <property type="chains" value="A/B=401-493"/>
</dbReference>
<dbReference type="PDB" id="5NMY">
    <property type="method" value="NMR"/>
    <property type="chains" value="A=251-493"/>
</dbReference>
<dbReference type="PDB" id="6RJE">
    <property type="method" value="X-ray"/>
    <property type="resolution" value="2.50 A"/>
    <property type="chains" value="A=401-493"/>
</dbReference>
<dbReference type="PDB" id="6RK4">
    <property type="method" value="X-ray"/>
    <property type="resolution" value="1.43 A"/>
    <property type="chains" value="A=1-493"/>
</dbReference>
<dbReference type="PDBsum" id="4LXC"/>
<dbReference type="PDBsum" id="4QP5"/>
<dbReference type="PDBsum" id="4QPB"/>
<dbReference type="PDBsum" id="5LEO"/>
<dbReference type="PDBsum" id="5NMY"/>
<dbReference type="PDBsum" id="6RJE"/>
<dbReference type="PDBsum" id="6RK4"/>
<dbReference type="SMR" id="P10547"/>
<dbReference type="MEROPS" id="M23.004"/>
<dbReference type="KEGG" id="ag:AAA26655"/>
<dbReference type="KEGG" id="ag:AAB53783"/>
<dbReference type="BRENDA" id="3.4.24.75">
    <property type="organism ID" value="5881"/>
</dbReference>
<dbReference type="EvolutionaryTrace" id="P10547"/>
<dbReference type="GO" id="GO:0005576">
    <property type="term" value="C:extracellular region"/>
    <property type="evidence" value="ECO:0007669"/>
    <property type="project" value="UniProtKB-SubCell"/>
</dbReference>
<dbReference type="GO" id="GO:0046872">
    <property type="term" value="F:metal ion binding"/>
    <property type="evidence" value="ECO:0007669"/>
    <property type="project" value="UniProtKB-KW"/>
</dbReference>
<dbReference type="GO" id="GO:0004222">
    <property type="term" value="F:metalloendopeptidase activity"/>
    <property type="evidence" value="ECO:0007669"/>
    <property type="project" value="TreeGrafter"/>
</dbReference>
<dbReference type="GO" id="GO:0071555">
    <property type="term" value="P:cell wall organization"/>
    <property type="evidence" value="ECO:0007669"/>
    <property type="project" value="UniProtKB-KW"/>
</dbReference>
<dbReference type="GO" id="GO:0006508">
    <property type="term" value="P:proteolysis"/>
    <property type="evidence" value="ECO:0007669"/>
    <property type="project" value="UniProtKB-KW"/>
</dbReference>
<dbReference type="CDD" id="cd12797">
    <property type="entry name" value="M23_peptidase"/>
    <property type="match status" value="1"/>
</dbReference>
<dbReference type="Gene3D" id="2.70.70.10">
    <property type="entry name" value="Glucose Permease (Domain IIA)"/>
    <property type="match status" value="1"/>
</dbReference>
<dbReference type="Gene3D" id="2.30.30.40">
    <property type="entry name" value="SH3 Domains"/>
    <property type="match status" value="1"/>
</dbReference>
<dbReference type="InterPro" id="IPR050570">
    <property type="entry name" value="Cell_wall_metabolism_enzyme"/>
</dbReference>
<dbReference type="InterPro" id="IPR011055">
    <property type="entry name" value="Dup_hybrid_motif"/>
</dbReference>
<dbReference type="InterPro" id="IPR016047">
    <property type="entry name" value="Peptidase_M23"/>
</dbReference>
<dbReference type="InterPro" id="IPR003646">
    <property type="entry name" value="SH3-like_bac-type"/>
</dbReference>
<dbReference type="PANTHER" id="PTHR21666:SF270">
    <property type="entry name" value="MUREIN HYDROLASE ACTIVATOR ENVC"/>
    <property type="match status" value="1"/>
</dbReference>
<dbReference type="PANTHER" id="PTHR21666">
    <property type="entry name" value="PEPTIDASE-RELATED"/>
    <property type="match status" value="1"/>
</dbReference>
<dbReference type="Pfam" id="PF20481">
    <property type="entry name" value="DUF6721"/>
    <property type="match status" value="2"/>
</dbReference>
<dbReference type="Pfam" id="PF01551">
    <property type="entry name" value="Peptidase_M23"/>
    <property type="match status" value="1"/>
</dbReference>
<dbReference type="Pfam" id="PF08460">
    <property type="entry name" value="SH3_5"/>
    <property type="match status" value="1"/>
</dbReference>
<dbReference type="SMART" id="SM00287">
    <property type="entry name" value="SH3b"/>
    <property type="match status" value="1"/>
</dbReference>
<dbReference type="SUPFAM" id="SSF51261">
    <property type="entry name" value="Duplicated hybrid motif"/>
    <property type="match status" value="1"/>
</dbReference>
<dbReference type="PROSITE" id="PS51781">
    <property type="entry name" value="SH3B"/>
    <property type="match status" value="1"/>
</dbReference>
<sequence length="493" mass="53091">MKKTKNNYYTRPLAIGLSTFALASIVYGGIQNETHASEKSNMDVSKKVAEVETSKAPVENTAEVETSKAPVENTAEVETSKAPVENTAEVETSKAPVENTAEVETSKAPVENTAEVETSKAPVENTAEVETSKAPVENTAEVETSKAPVENTAEVETSKAPVENTAEVETSKAPVENTAEVETSKAPVENTAEVETSKAPVENTAEVETSKAPVENTAEVETSKAPVENTAEVETSKALVQNRTALRAATHEHSAQWLNNYKKGYGYGPYPLGINGGMHYGVDFFMNIGTPVKAISSGKIVEAGWSNYGGGNQIGLIENDGVHRQWYMHLSKYNVKVGDYVKAGQIIGWSGSTGYSTAPHLHFQRMVNSFSNSTAQDPMPFLKSAGYGKAGGTVTPTPNTGWKTNKYGTLYKSESASFTPNTDIITRTTGPFRSMPQSGVLKAGQTIHYDEVMKQDGHVWVGYTGNSGQRIYLPVRTWNKSTNTLGVLWGTIK</sequence>
<proteinExistence type="evidence at protein level"/>
<feature type="signal peptide" evidence="1">
    <location>
        <begin position="1"/>
        <end position="23"/>
    </location>
</feature>
<feature type="propeptide" id="PRO_0000026815">
    <location>
        <begin position="24"/>
        <end position="247"/>
    </location>
</feature>
<feature type="chain" id="PRO_0000026816" description="Lysostaphin">
    <location>
        <begin position="248"/>
        <end position="493"/>
    </location>
</feature>
<feature type="repeat" description="1">
    <location>
        <begin position="49"/>
        <end position="61"/>
    </location>
</feature>
<feature type="repeat" description="2">
    <location>
        <begin position="62"/>
        <end position="74"/>
    </location>
</feature>
<feature type="repeat" description="3">
    <location>
        <begin position="75"/>
        <end position="87"/>
    </location>
</feature>
<feature type="repeat" description="4">
    <location>
        <begin position="88"/>
        <end position="100"/>
    </location>
</feature>
<feature type="repeat" description="5">
    <location>
        <begin position="101"/>
        <end position="113"/>
    </location>
</feature>
<feature type="repeat" description="6">
    <location>
        <begin position="114"/>
        <end position="126"/>
    </location>
</feature>
<feature type="repeat" description="7">
    <location>
        <begin position="127"/>
        <end position="139"/>
    </location>
</feature>
<feature type="repeat" description="8">
    <location>
        <begin position="140"/>
        <end position="152"/>
    </location>
</feature>
<feature type="repeat" description="9">
    <location>
        <begin position="153"/>
        <end position="165"/>
    </location>
</feature>
<feature type="repeat" description="10">
    <location>
        <begin position="166"/>
        <end position="178"/>
    </location>
</feature>
<feature type="repeat" description="11">
    <location>
        <begin position="179"/>
        <end position="191"/>
    </location>
</feature>
<feature type="repeat" description="12">
    <location>
        <begin position="192"/>
        <end position="204"/>
    </location>
</feature>
<feature type="repeat" description="13">
    <location>
        <begin position="205"/>
        <end position="217"/>
    </location>
</feature>
<feature type="repeat" description="14">
    <location>
        <begin position="218"/>
        <end position="230"/>
    </location>
</feature>
<feature type="repeat" description="15; approximate">
    <location>
        <begin position="231"/>
        <end position="243"/>
    </location>
</feature>
<feature type="domain" description="SH3b" evidence="2">
    <location>
        <begin position="413"/>
        <end position="481"/>
    </location>
</feature>
<feature type="region of interest" description="15 X 13 AA approximate tandem repeats of A-E-V-E-T-S-K-A-P-V-E-N-T">
    <location>
        <begin position="49"/>
        <end position="243"/>
    </location>
</feature>
<feature type="region of interest" description="Disordered" evidence="3">
    <location>
        <begin position="52"/>
        <end position="232"/>
    </location>
</feature>
<feature type="active site">
    <location>
        <position position="360"/>
    </location>
</feature>
<feature type="binding site">
    <location>
        <position position="279"/>
    </location>
    <ligand>
        <name>Zn(2+)</name>
        <dbReference type="ChEBI" id="CHEBI:29105"/>
    </ligand>
</feature>
<feature type="binding site">
    <location>
        <position position="283"/>
    </location>
    <ligand>
        <name>Zn(2+)</name>
        <dbReference type="ChEBI" id="CHEBI:29105"/>
    </ligand>
</feature>
<feature type="binding site">
    <location>
        <position position="362"/>
    </location>
    <ligand>
        <name>Zn(2+)</name>
        <dbReference type="ChEBI" id="CHEBI:29105"/>
    </ligand>
</feature>
<feature type="sequence conflict" description="In Ref. 1." evidence="4" ref="1">
    <location>
        <begin position="135"/>
        <end position="238"/>
    </location>
</feature>
<feature type="strand" evidence="5">
    <location>
        <begin position="251"/>
        <end position="253"/>
    </location>
</feature>
<feature type="helix" evidence="6">
    <location>
        <begin position="256"/>
        <end position="260"/>
    </location>
</feature>
<feature type="strand" evidence="7">
    <location>
        <begin position="261"/>
        <end position="263"/>
    </location>
</feature>
<feature type="strand" evidence="6">
    <location>
        <begin position="267"/>
        <end position="269"/>
    </location>
</feature>
<feature type="strand" evidence="6">
    <location>
        <begin position="271"/>
        <end position="273"/>
    </location>
</feature>
<feature type="helix" evidence="6">
    <location>
        <begin position="274"/>
        <end position="276"/>
    </location>
</feature>
<feature type="strand" evidence="6">
    <location>
        <begin position="281"/>
        <end position="285"/>
    </location>
</feature>
<feature type="strand" evidence="6">
    <location>
        <begin position="291"/>
        <end position="293"/>
    </location>
</feature>
<feature type="strand" evidence="6">
    <location>
        <begin position="298"/>
        <end position="306"/>
    </location>
</feature>
<feature type="turn" evidence="6">
    <location>
        <begin position="307"/>
        <end position="310"/>
    </location>
</feature>
<feature type="strand" evidence="6">
    <location>
        <begin position="311"/>
        <end position="318"/>
    </location>
</feature>
<feature type="strand" evidence="6">
    <location>
        <begin position="321"/>
        <end position="334"/>
    </location>
</feature>
<feature type="strand" evidence="6">
    <location>
        <begin position="346"/>
        <end position="349"/>
    </location>
</feature>
<feature type="strand" evidence="7">
    <location>
        <begin position="353"/>
        <end position="355"/>
    </location>
</feature>
<feature type="strand" evidence="6">
    <location>
        <begin position="360"/>
        <end position="372"/>
    </location>
</feature>
<feature type="helix" evidence="6">
    <location>
        <begin position="379"/>
        <end position="383"/>
    </location>
</feature>
<feature type="turn" evidence="5">
    <location>
        <begin position="385"/>
        <end position="388"/>
    </location>
</feature>
<feature type="strand" evidence="5">
    <location>
        <begin position="389"/>
        <end position="391"/>
    </location>
</feature>
<feature type="strand" evidence="5">
    <location>
        <begin position="399"/>
        <end position="401"/>
    </location>
</feature>
<feature type="strand" evidence="8">
    <location>
        <begin position="410"/>
        <end position="422"/>
    </location>
</feature>
<feature type="strand" evidence="8">
    <location>
        <begin position="424"/>
        <end position="431"/>
    </location>
</feature>
<feature type="strand" evidence="8">
    <location>
        <begin position="437"/>
        <end position="441"/>
    </location>
</feature>
<feature type="strand" evidence="8">
    <location>
        <begin position="447"/>
        <end position="455"/>
    </location>
</feature>
<feature type="strand" evidence="8">
    <location>
        <begin position="458"/>
        <end position="464"/>
    </location>
</feature>
<feature type="strand" evidence="8">
    <location>
        <begin position="468"/>
        <end position="479"/>
    </location>
</feature>
<feature type="turn" evidence="8">
    <location>
        <begin position="480"/>
        <end position="483"/>
    </location>
</feature>
<feature type="strand" evidence="8">
    <location>
        <begin position="489"/>
        <end position="492"/>
    </location>
</feature>
<gene>
    <name type="primary">lss</name>
</gene>
<accession>P10547</accession>
<accession>O05988</accession>
<protein>
    <recommendedName>
        <fullName>Lysostaphin</fullName>
        <ecNumber>3.4.24.75</ecNumber>
    </recommendedName>
    <alternativeName>
        <fullName>Glycyl-glycine endopeptidase</fullName>
    </alternativeName>
</protein>